<comment type="function">
    <text evidence="1">Catalyzes a mechanistically unusual reaction, the ATP-dependent insertion of CO2 between the N7 and N8 nitrogen atoms of 7,8-diaminopelargonic acid (DAPA, also called 7,8-diammoniononanoate) to form a ureido ring.</text>
</comment>
<comment type="catalytic activity">
    <reaction evidence="1">
        <text>(7R,8S)-7,8-diammoniononanoate + CO2 + ATP = (4R,5S)-dethiobiotin + ADP + phosphate + 3 H(+)</text>
        <dbReference type="Rhea" id="RHEA:15805"/>
        <dbReference type="ChEBI" id="CHEBI:15378"/>
        <dbReference type="ChEBI" id="CHEBI:16526"/>
        <dbReference type="ChEBI" id="CHEBI:30616"/>
        <dbReference type="ChEBI" id="CHEBI:43474"/>
        <dbReference type="ChEBI" id="CHEBI:149469"/>
        <dbReference type="ChEBI" id="CHEBI:149473"/>
        <dbReference type="ChEBI" id="CHEBI:456216"/>
        <dbReference type="EC" id="6.3.3.3"/>
    </reaction>
</comment>
<comment type="cofactor">
    <cofactor evidence="1">
        <name>Mg(2+)</name>
        <dbReference type="ChEBI" id="CHEBI:18420"/>
    </cofactor>
</comment>
<comment type="pathway">
    <text evidence="1">Cofactor biosynthesis; biotin biosynthesis; biotin from 7,8-diaminononanoate: step 1/2.</text>
</comment>
<comment type="subunit">
    <text evidence="1">Homodimer.</text>
</comment>
<comment type="subcellular location">
    <subcellularLocation>
        <location evidence="1">Cytoplasm</location>
    </subcellularLocation>
</comment>
<comment type="similarity">
    <text evidence="1">Belongs to the dethiobiotin synthetase family.</text>
</comment>
<accession>B8IBW1</accession>
<keyword id="KW-0067">ATP-binding</keyword>
<keyword id="KW-0093">Biotin biosynthesis</keyword>
<keyword id="KW-0963">Cytoplasm</keyword>
<keyword id="KW-0436">Ligase</keyword>
<keyword id="KW-0460">Magnesium</keyword>
<keyword id="KW-0479">Metal-binding</keyword>
<keyword id="KW-0547">Nucleotide-binding</keyword>
<keyword id="KW-1185">Reference proteome</keyword>
<gene>
    <name evidence="1" type="primary">bioD</name>
    <name type="ordered locus">Mnod_6356</name>
</gene>
<evidence type="ECO:0000255" key="1">
    <source>
        <dbReference type="HAMAP-Rule" id="MF_00336"/>
    </source>
</evidence>
<protein>
    <recommendedName>
        <fullName evidence="1">ATP-dependent dethiobiotin synthetase BioD</fullName>
        <ecNumber evidence="1">6.3.3.3</ecNumber>
    </recommendedName>
    <alternativeName>
        <fullName evidence="1">DTB synthetase</fullName>
        <shortName evidence="1">DTBS</shortName>
    </alternativeName>
    <alternativeName>
        <fullName evidence="1">Dethiobiotin synthase</fullName>
    </alternativeName>
</protein>
<sequence>MSTLFVAGAGTEIGKTYVTAALTRALRASGRPVRALKPVASGVPDLSDPDFSASDTALLLAAQDLPVTPETVAAMTPWRFAAPLAPDLAAAREGRSLALADLVAWCETAIAAPAPGTAVLIEGVGGLMSPLTAEATGLAWLKALRLPVLLVSGSYLGAISHALTAIETLHHHAVDLRAVVVSETPGAPTPPETVAEAIARHAGVRVLCVARGGGFPAEGLDVVPA</sequence>
<reference key="1">
    <citation type="submission" date="2009-01" db="EMBL/GenBank/DDBJ databases">
        <title>Complete sequence of chromosome of Methylobacterium nodulans ORS 2060.</title>
        <authorList>
            <consortium name="US DOE Joint Genome Institute"/>
            <person name="Lucas S."/>
            <person name="Copeland A."/>
            <person name="Lapidus A."/>
            <person name="Glavina del Rio T."/>
            <person name="Dalin E."/>
            <person name="Tice H."/>
            <person name="Bruce D."/>
            <person name="Goodwin L."/>
            <person name="Pitluck S."/>
            <person name="Sims D."/>
            <person name="Brettin T."/>
            <person name="Detter J.C."/>
            <person name="Han C."/>
            <person name="Larimer F."/>
            <person name="Land M."/>
            <person name="Hauser L."/>
            <person name="Kyrpides N."/>
            <person name="Ivanova N."/>
            <person name="Marx C.J."/>
            <person name="Richardson P."/>
        </authorList>
    </citation>
    <scope>NUCLEOTIDE SEQUENCE [LARGE SCALE GENOMIC DNA]</scope>
    <source>
        <strain>LMG 21967 / CNCM I-2342 / ORS 2060</strain>
    </source>
</reference>
<name>BIOD_METNO</name>
<feature type="chain" id="PRO_1000133214" description="ATP-dependent dethiobiotin synthetase BioD">
    <location>
        <begin position="1"/>
        <end position="225"/>
    </location>
</feature>
<feature type="active site" evidence="1">
    <location>
        <position position="37"/>
    </location>
</feature>
<feature type="binding site" evidence="1">
    <location>
        <begin position="12"/>
        <end position="17"/>
    </location>
    <ligand>
        <name>ATP</name>
        <dbReference type="ChEBI" id="CHEBI:30616"/>
    </ligand>
</feature>
<feature type="binding site" evidence="1">
    <location>
        <position position="16"/>
    </location>
    <ligand>
        <name>Mg(2+)</name>
        <dbReference type="ChEBI" id="CHEBI:18420"/>
    </ligand>
</feature>
<feature type="binding site" evidence="1">
    <location>
        <position position="41"/>
    </location>
    <ligand>
        <name>substrate</name>
    </ligand>
</feature>
<feature type="binding site" evidence="1">
    <location>
        <position position="55"/>
    </location>
    <ligand>
        <name>ATP</name>
        <dbReference type="ChEBI" id="CHEBI:30616"/>
    </ligand>
</feature>
<feature type="binding site" evidence="1">
    <location>
        <position position="55"/>
    </location>
    <ligand>
        <name>Mg(2+)</name>
        <dbReference type="ChEBI" id="CHEBI:18420"/>
    </ligand>
</feature>
<feature type="binding site" evidence="1">
    <location>
        <begin position="122"/>
        <end position="125"/>
    </location>
    <ligand>
        <name>ATP</name>
        <dbReference type="ChEBI" id="CHEBI:30616"/>
    </ligand>
</feature>
<feature type="binding site" evidence="1">
    <location>
        <position position="122"/>
    </location>
    <ligand>
        <name>Mg(2+)</name>
        <dbReference type="ChEBI" id="CHEBI:18420"/>
    </ligand>
</feature>
<feature type="binding site" evidence="1">
    <location>
        <begin position="182"/>
        <end position="183"/>
    </location>
    <ligand>
        <name>ATP</name>
        <dbReference type="ChEBI" id="CHEBI:30616"/>
    </ligand>
</feature>
<dbReference type="EC" id="6.3.3.3" evidence="1"/>
<dbReference type="EMBL" id="CP001349">
    <property type="protein sequence ID" value="ACL61143.1"/>
    <property type="molecule type" value="Genomic_DNA"/>
</dbReference>
<dbReference type="RefSeq" id="WP_015932722.1">
    <property type="nucleotide sequence ID" value="NC_011894.1"/>
</dbReference>
<dbReference type="SMR" id="B8IBW1"/>
<dbReference type="STRING" id="460265.Mnod_6356"/>
<dbReference type="KEGG" id="mno:Mnod_6356"/>
<dbReference type="eggNOG" id="COG0132">
    <property type="taxonomic scope" value="Bacteria"/>
</dbReference>
<dbReference type="HOGENOM" id="CLU_072551_3_0_5"/>
<dbReference type="OrthoDB" id="9802097at2"/>
<dbReference type="UniPathway" id="UPA00078">
    <property type="reaction ID" value="UER00161"/>
</dbReference>
<dbReference type="Proteomes" id="UP000008207">
    <property type="component" value="Chromosome"/>
</dbReference>
<dbReference type="GO" id="GO:0005829">
    <property type="term" value="C:cytosol"/>
    <property type="evidence" value="ECO:0007669"/>
    <property type="project" value="TreeGrafter"/>
</dbReference>
<dbReference type="GO" id="GO:0005524">
    <property type="term" value="F:ATP binding"/>
    <property type="evidence" value="ECO:0007669"/>
    <property type="project" value="UniProtKB-UniRule"/>
</dbReference>
<dbReference type="GO" id="GO:0004141">
    <property type="term" value="F:dethiobiotin synthase activity"/>
    <property type="evidence" value="ECO:0007669"/>
    <property type="project" value="UniProtKB-UniRule"/>
</dbReference>
<dbReference type="GO" id="GO:0000287">
    <property type="term" value="F:magnesium ion binding"/>
    <property type="evidence" value="ECO:0007669"/>
    <property type="project" value="UniProtKB-UniRule"/>
</dbReference>
<dbReference type="GO" id="GO:0009102">
    <property type="term" value="P:biotin biosynthetic process"/>
    <property type="evidence" value="ECO:0007669"/>
    <property type="project" value="UniProtKB-UniRule"/>
</dbReference>
<dbReference type="CDD" id="cd03109">
    <property type="entry name" value="DTBS"/>
    <property type="match status" value="1"/>
</dbReference>
<dbReference type="Gene3D" id="3.40.50.300">
    <property type="entry name" value="P-loop containing nucleotide triphosphate hydrolases"/>
    <property type="match status" value="1"/>
</dbReference>
<dbReference type="HAMAP" id="MF_00336">
    <property type="entry name" value="BioD"/>
    <property type="match status" value="1"/>
</dbReference>
<dbReference type="InterPro" id="IPR004472">
    <property type="entry name" value="DTB_synth_BioD"/>
</dbReference>
<dbReference type="InterPro" id="IPR027417">
    <property type="entry name" value="P-loop_NTPase"/>
</dbReference>
<dbReference type="NCBIfam" id="TIGR00347">
    <property type="entry name" value="bioD"/>
    <property type="match status" value="1"/>
</dbReference>
<dbReference type="PANTHER" id="PTHR43210">
    <property type="entry name" value="DETHIOBIOTIN SYNTHETASE"/>
    <property type="match status" value="1"/>
</dbReference>
<dbReference type="PANTHER" id="PTHR43210:SF5">
    <property type="entry name" value="DETHIOBIOTIN SYNTHETASE"/>
    <property type="match status" value="1"/>
</dbReference>
<dbReference type="Pfam" id="PF13500">
    <property type="entry name" value="AAA_26"/>
    <property type="match status" value="1"/>
</dbReference>
<dbReference type="PIRSF" id="PIRSF006755">
    <property type="entry name" value="DTB_synth"/>
    <property type="match status" value="1"/>
</dbReference>
<dbReference type="SUPFAM" id="SSF52540">
    <property type="entry name" value="P-loop containing nucleoside triphosphate hydrolases"/>
    <property type="match status" value="1"/>
</dbReference>
<proteinExistence type="inferred from homology"/>
<organism>
    <name type="scientific">Methylobacterium nodulans (strain LMG 21967 / CNCM I-2342 / ORS 2060)</name>
    <dbReference type="NCBI Taxonomy" id="460265"/>
    <lineage>
        <taxon>Bacteria</taxon>
        <taxon>Pseudomonadati</taxon>
        <taxon>Pseudomonadota</taxon>
        <taxon>Alphaproteobacteria</taxon>
        <taxon>Hyphomicrobiales</taxon>
        <taxon>Methylobacteriaceae</taxon>
        <taxon>Methylobacterium</taxon>
    </lineage>
</organism>